<keyword id="KW-0436">Ligase</keyword>
<keyword id="KW-0597">Phosphoprotein</keyword>
<keyword id="KW-0662">Pyridine nucleotide biosynthesis</keyword>
<keyword id="KW-1185">Reference proteome</keyword>
<comment type="function">
    <text evidence="1">Catalyzes the synthesis of beta-nicotinate D-ribonucleotide from nicotinate and 5-phospho-D-ribose 1-phosphate at the expense of ATP.</text>
</comment>
<comment type="catalytic activity">
    <reaction evidence="1">
        <text>nicotinate + 5-phospho-alpha-D-ribose 1-diphosphate + ATP + H2O = nicotinate beta-D-ribonucleotide + ADP + phosphate + diphosphate</text>
        <dbReference type="Rhea" id="RHEA:36163"/>
        <dbReference type="ChEBI" id="CHEBI:15377"/>
        <dbReference type="ChEBI" id="CHEBI:30616"/>
        <dbReference type="ChEBI" id="CHEBI:32544"/>
        <dbReference type="ChEBI" id="CHEBI:33019"/>
        <dbReference type="ChEBI" id="CHEBI:43474"/>
        <dbReference type="ChEBI" id="CHEBI:57502"/>
        <dbReference type="ChEBI" id="CHEBI:58017"/>
        <dbReference type="ChEBI" id="CHEBI:456216"/>
        <dbReference type="EC" id="6.3.4.21"/>
    </reaction>
</comment>
<comment type="pathway">
    <text evidence="1">Cofactor biosynthesis; NAD(+) biosynthesis; nicotinate D-ribonucleotide from nicotinate: step 1/1.</text>
</comment>
<comment type="PTM">
    <text evidence="1">Transiently phosphorylated on a His residue during the reaction cycle. Phosphorylation strongly increases the affinity for substrates and increases the rate of nicotinate D-ribonucleotide production. Dephosphorylation regenerates the low-affinity form of the enzyme, leading to product release.</text>
</comment>
<comment type="similarity">
    <text evidence="1">Belongs to the NAPRTase family.</text>
</comment>
<dbReference type="EC" id="6.3.4.21" evidence="1"/>
<dbReference type="EMBL" id="CU207211">
    <property type="protein sequence ID" value="CAL60255.1"/>
    <property type="molecule type" value="Genomic_DNA"/>
</dbReference>
<dbReference type="SMR" id="A4G168"/>
<dbReference type="STRING" id="204773.HEAR0018"/>
<dbReference type="KEGG" id="har:HEAR0018"/>
<dbReference type="eggNOG" id="COG1488">
    <property type="taxonomic scope" value="Bacteria"/>
</dbReference>
<dbReference type="HOGENOM" id="CLU_030991_1_0_4"/>
<dbReference type="OrthoDB" id="9771406at2"/>
<dbReference type="UniPathway" id="UPA00253">
    <property type="reaction ID" value="UER00457"/>
</dbReference>
<dbReference type="Proteomes" id="UP000006697">
    <property type="component" value="Chromosome"/>
</dbReference>
<dbReference type="GO" id="GO:0005829">
    <property type="term" value="C:cytosol"/>
    <property type="evidence" value="ECO:0007669"/>
    <property type="project" value="TreeGrafter"/>
</dbReference>
<dbReference type="GO" id="GO:0004516">
    <property type="term" value="F:nicotinate phosphoribosyltransferase activity"/>
    <property type="evidence" value="ECO:0007669"/>
    <property type="project" value="UniProtKB-UniRule"/>
</dbReference>
<dbReference type="GO" id="GO:0034355">
    <property type="term" value="P:NAD biosynthetic process via the salvage pathway"/>
    <property type="evidence" value="ECO:0007669"/>
    <property type="project" value="TreeGrafter"/>
</dbReference>
<dbReference type="Gene3D" id="3.20.140.10">
    <property type="entry name" value="nicotinate phosphoribosyltransferase"/>
    <property type="match status" value="1"/>
</dbReference>
<dbReference type="HAMAP" id="MF_00570">
    <property type="entry name" value="NAPRTase"/>
    <property type="match status" value="1"/>
</dbReference>
<dbReference type="InterPro" id="IPR041525">
    <property type="entry name" value="N/Namide_PRibTrfase"/>
</dbReference>
<dbReference type="InterPro" id="IPR040727">
    <property type="entry name" value="NAPRTase_N"/>
</dbReference>
<dbReference type="InterPro" id="IPR006406">
    <property type="entry name" value="Nic_PRibTrfase"/>
</dbReference>
<dbReference type="InterPro" id="IPR007229">
    <property type="entry name" value="Nic_PRibTrfase-Fam"/>
</dbReference>
<dbReference type="InterPro" id="IPR036068">
    <property type="entry name" value="Nicotinate_pribotase-like_C"/>
</dbReference>
<dbReference type="NCBIfam" id="TIGR01514">
    <property type="entry name" value="NAPRTase"/>
    <property type="match status" value="1"/>
</dbReference>
<dbReference type="NCBIfam" id="NF003704">
    <property type="entry name" value="PRK05321.1"/>
    <property type="match status" value="1"/>
</dbReference>
<dbReference type="PANTHER" id="PTHR11098">
    <property type="entry name" value="NICOTINATE PHOSPHORIBOSYLTRANSFERASE"/>
    <property type="match status" value="1"/>
</dbReference>
<dbReference type="PANTHER" id="PTHR11098:SF1">
    <property type="entry name" value="NICOTINATE PHOSPHORIBOSYLTRANSFERASE"/>
    <property type="match status" value="1"/>
</dbReference>
<dbReference type="Pfam" id="PF04095">
    <property type="entry name" value="NAPRTase"/>
    <property type="match status" value="1"/>
</dbReference>
<dbReference type="Pfam" id="PF17767">
    <property type="entry name" value="NAPRTase_N"/>
    <property type="match status" value="1"/>
</dbReference>
<dbReference type="PIRSF" id="PIRSF000484">
    <property type="entry name" value="NAPRT"/>
    <property type="match status" value="1"/>
</dbReference>
<dbReference type="SUPFAM" id="SSF51690">
    <property type="entry name" value="Nicotinate/Quinolinate PRTase C-terminal domain-like"/>
    <property type="match status" value="1"/>
</dbReference>
<dbReference type="SUPFAM" id="SSF54675">
    <property type="entry name" value="Nicotinate/Quinolinate PRTase N-terminal domain-like"/>
    <property type="match status" value="1"/>
</dbReference>
<accession>A4G168</accession>
<evidence type="ECO:0000255" key="1">
    <source>
        <dbReference type="HAMAP-Rule" id="MF_00570"/>
    </source>
</evidence>
<sequence length="397" mass="45514">MPPIVNNLLENDLYKFTMWQALLHSHPEAQTEYEFVCRNAPAYPLSELKADVERELDHLCTLAFRDDELLYLRSLRFMKSDFVDFLTVFRFQRKFITVAADGPALRIRAIGPQVHVMGFEIFVLCIVNELYLRRFDQQASLTEARRRLQEKIRLLKNFGKEATRKNPFEFFDFGVRRRFSAAWHEEVVVTLAREVPQYFTGTSNVHLAKKYGLTPIGTMAHEYLQAYQSFGVRLRDFQKAALEDWVQEYRGDLGIALTDVVGMDAFLADFDLYFAKLFDGLRHDSGDPIEWGEKALAHYARLRIDAGSKRLVFSDALDLPGAFSLYRHFADRTLTGFGIGTNLSNDTGIPALNIVMKLMACNGQPVAKLSDSAGKTLCRDETFLAYLRQVFHHPAVK</sequence>
<proteinExistence type="inferred from homology"/>
<protein>
    <recommendedName>
        <fullName evidence="1">Nicotinate phosphoribosyltransferase</fullName>
        <shortName evidence="1">NAPRTase</shortName>
        <ecNumber evidence="1">6.3.4.21</ecNumber>
    </recommendedName>
</protein>
<reference key="1">
    <citation type="journal article" date="2007" name="PLoS Genet.">
        <title>A tale of two oxidation states: bacterial colonization of arsenic-rich environments.</title>
        <authorList>
            <person name="Muller D."/>
            <person name="Medigue C."/>
            <person name="Koechler S."/>
            <person name="Barbe V."/>
            <person name="Barakat M."/>
            <person name="Talla E."/>
            <person name="Bonnefoy V."/>
            <person name="Krin E."/>
            <person name="Arsene-Ploetze F."/>
            <person name="Carapito C."/>
            <person name="Chandler M."/>
            <person name="Cournoyer B."/>
            <person name="Cruveiller S."/>
            <person name="Dossat C."/>
            <person name="Duval S."/>
            <person name="Heymann M."/>
            <person name="Leize E."/>
            <person name="Lieutaud A."/>
            <person name="Lievremont D."/>
            <person name="Makita Y."/>
            <person name="Mangenot S."/>
            <person name="Nitschke W."/>
            <person name="Ortet P."/>
            <person name="Perdrial N."/>
            <person name="Schoepp B."/>
            <person name="Siguier P."/>
            <person name="Simeonova D.D."/>
            <person name="Rouy Z."/>
            <person name="Segurens B."/>
            <person name="Turlin E."/>
            <person name="Vallenet D."/>
            <person name="van Dorsselaer A."/>
            <person name="Weiss S."/>
            <person name="Weissenbach J."/>
            <person name="Lett M.-C."/>
            <person name="Danchin A."/>
            <person name="Bertin P.N."/>
        </authorList>
    </citation>
    <scope>NUCLEOTIDE SEQUENCE [LARGE SCALE GENOMIC DNA]</scope>
    <source>
        <strain>ULPAs1</strain>
    </source>
</reference>
<name>PNCB_HERAR</name>
<feature type="chain" id="PRO_1000212085" description="Nicotinate phosphoribosyltransferase">
    <location>
        <begin position="1"/>
        <end position="397"/>
    </location>
</feature>
<feature type="modified residue" description="Phosphohistidine; by autocatalysis" evidence="1">
    <location>
        <position position="221"/>
    </location>
</feature>
<gene>
    <name evidence="1" type="primary">pncB</name>
    <name type="ordered locus">HEAR0018</name>
</gene>
<organism>
    <name type="scientific">Herminiimonas arsenicoxydans</name>
    <dbReference type="NCBI Taxonomy" id="204773"/>
    <lineage>
        <taxon>Bacteria</taxon>
        <taxon>Pseudomonadati</taxon>
        <taxon>Pseudomonadota</taxon>
        <taxon>Betaproteobacteria</taxon>
        <taxon>Burkholderiales</taxon>
        <taxon>Oxalobacteraceae</taxon>
        <taxon>Herminiimonas</taxon>
    </lineage>
</organism>